<name>RL34_BACC4</name>
<keyword id="KW-0687">Ribonucleoprotein</keyword>
<keyword id="KW-0689">Ribosomal protein</keyword>
<evidence type="ECO:0000255" key="1">
    <source>
        <dbReference type="HAMAP-Rule" id="MF_00391"/>
    </source>
</evidence>
<evidence type="ECO:0000256" key="2">
    <source>
        <dbReference type="SAM" id="MobiDB-lite"/>
    </source>
</evidence>
<evidence type="ECO:0000305" key="3"/>
<accession>B7H7A6</accession>
<reference key="1">
    <citation type="submission" date="2008-10" db="EMBL/GenBank/DDBJ databases">
        <title>Genome sequence of Bacillus cereus B4264.</title>
        <authorList>
            <person name="Dodson R.J."/>
            <person name="Durkin A.S."/>
            <person name="Rosovitz M.J."/>
            <person name="Rasko D.A."/>
            <person name="Hoffmaster A."/>
            <person name="Ravel J."/>
            <person name="Sutton G."/>
        </authorList>
    </citation>
    <scope>NUCLEOTIDE SEQUENCE [LARGE SCALE GENOMIC DNA]</scope>
    <source>
        <strain>B4264</strain>
    </source>
</reference>
<organism>
    <name type="scientific">Bacillus cereus (strain B4264)</name>
    <dbReference type="NCBI Taxonomy" id="405532"/>
    <lineage>
        <taxon>Bacteria</taxon>
        <taxon>Bacillati</taxon>
        <taxon>Bacillota</taxon>
        <taxon>Bacilli</taxon>
        <taxon>Bacillales</taxon>
        <taxon>Bacillaceae</taxon>
        <taxon>Bacillus</taxon>
        <taxon>Bacillus cereus group</taxon>
    </lineage>
</organism>
<proteinExistence type="inferred from homology"/>
<dbReference type="EMBL" id="CP001176">
    <property type="protein sequence ID" value="ACK59225.1"/>
    <property type="molecule type" value="Genomic_DNA"/>
</dbReference>
<dbReference type="RefSeq" id="WP_000831901.1">
    <property type="nucleotide sequence ID" value="NZ_VEHB01000004.1"/>
</dbReference>
<dbReference type="SMR" id="B7H7A6"/>
<dbReference type="GeneID" id="93005634"/>
<dbReference type="KEGG" id="bcb:BCB4264_A5615"/>
<dbReference type="HOGENOM" id="CLU_129938_2_0_9"/>
<dbReference type="Proteomes" id="UP000007096">
    <property type="component" value="Chromosome"/>
</dbReference>
<dbReference type="GO" id="GO:1990904">
    <property type="term" value="C:ribonucleoprotein complex"/>
    <property type="evidence" value="ECO:0007669"/>
    <property type="project" value="UniProtKB-KW"/>
</dbReference>
<dbReference type="GO" id="GO:0005840">
    <property type="term" value="C:ribosome"/>
    <property type="evidence" value="ECO:0007669"/>
    <property type="project" value="UniProtKB-KW"/>
</dbReference>
<dbReference type="GO" id="GO:0003735">
    <property type="term" value="F:structural constituent of ribosome"/>
    <property type="evidence" value="ECO:0007669"/>
    <property type="project" value="InterPro"/>
</dbReference>
<dbReference type="GO" id="GO:0006412">
    <property type="term" value="P:translation"/>
    <property type="evidence" value="ECO:0007669"/>
    <property type="project" value="UniProtKB-UniRule"/>
</dbReference>
<dbReference type="FunFam" id="1.10.287.3980:FF:000001">
    <property type="entry name" value="Mitochondrial ribosomal protein L34"/>
    <property type="match status" value="1"/>
</dbReference>
<dbReference type="Gene3D" id="1.10.287.3980">
    <property type="match status" value="1"/>
</dbReference>
<dbReference type="HAMAP" id="MF_00391">
    <property type="entry name" value="Ribosomal_bL34"/>
    <property type="match status" value="1"/>
</dbReference>
<dbReference type="InterPro" id="IPR000271">
    <property type="entry name" value="Ribosomal_bL34"/>
</dbReference>
<dbReference type="InterPro" id="IPR020939">
    <property type="entry name" value="Ribosomal_bL34_CS"/>
</dbReference>
<dbReference type="NCBIfam" id="TIGR01030">
    <property type="entry name" value="rpmH_bact"/>
    <property type="match status" value="1"/>
</dbReference>
<dbReference type="PANTHER" id="PTHR14503:SF4">
    <property type="entry name" value="LARGE RIBOSOMAL SUBUNIT PROTEIN BL34M"/>
    <property type="match status" value="1"/>
</dbReference>
<dbReference type="PANTHER" id="PTHR14503">
    <property type="entry name" value="MITOCHONDRIAL RIBOSOMAL PROTEIN 34 FAMILY MEMBER"/>
    <property type="match status" value="1"/>
</dbReference>
<dbReference type="Pfam" id="PF00468">
    <property type="entry name" value="Ribosomal_L34"/>
    <property type="match status" value="1"/>
</dbReference>
<dbReference type="PROSITE" id="PS00784">
    <property type="entry name" value="RIBOSOMAL_L34"/>
    <property type="match status" value="1"/>
</dbReference>
<protein>
    <recommendedName>
        <fullName evidence="1">Large ribosomal subunit protein bL34</fullName>
    </recommendedName>
    <alternativeName>
        <fullName evidence="3">50S ribosomal protein L34</fullName>
    </alternativeName>
</protein>
<gene>
    <name evidence="1" type="primary">rpmH</name>
    <name type="ordered locus">BCB4264_A5615</name>
</gene>
<sequence length="44" mass="5170">MKRTYQPNKRKRSKVHGFRSRMSTANGRKVLAARRRKGRKVLSA</sequence>
<comment type="similarity">
    <text evidence="1">Belongs to the bacterial ribosomal protein bL34 family.</text>
</comment>
<feature type="chain" id="PRO_1000122894" description="Large ribosomal subunit protein bL34">
    <location>
        <begin position="1"/>
        <end position="44"/>
    </location>
</feature>
<feature type="region of interest" description="Disordered" evidence="2">
    <location>
        <begin position="1"/>
        <end position="44"/>
    </location>
</feature>
<feature type="compositionally biased region" description="Basic residues" evidence="2">
    <location>
        <begin position="1"/>
        <end position="19"/>
    </location>
</feature>
<feature type="compositionally biased region" description="Basic residues" evidence="2">
    <location>
        <begin position="31"/>
        <end position="44"/>
    </location>
</feature>